<evidence type="ECO:0000250" key="1"/>
<evidence type="ECO:0000255" key="2"/>
<evidence type="ECO:0000305" key="3"/>
<proteinExistence type="inferred from homology"/>
<comment type="subcellular location">
    <subcellularLocation>
        <location evidence="1">Cell membrane</location>
        <topology evidence="1">Multi-pass membrane protein</topology>
    </subcellularLocation>
</comment>
<comment type="similarity">
    <text evidence="3">Belongs to the UPF0754 family.</text>
</comment>
<dbReference type="EMBL" id="BX571857">
    <property type="protein sequence ID" value="CAG43572.1"/>
    <property type="molecule type" value="Genomic_DNA"/>
</dbReference>
<dbReference type="RefSeq" id="WP_000992521.1">
    <property type="nucleotide sequence ID" value="NC_002953.3"/>
</dbReference>
<dbReference type="SMR" id="Q6G889"/>
<dbReference type="KEGG" id="sas:SAS1767"/>
<dbReference type="HOGENOM" id="CLU_042384_0_0_9"/>
<dbReference type="GO" id="GO:0005886">
    <property type="term" value="C:plasma membrane"/>
    <property type="evidence" value="ECO:0007669"/>
    <property type="project" value="UniProtKB-SubCell"/>
</dbReference>
<dbReference type="InterPro" id="IPR007383">
    <property type="entry name" value="DUF445"/>
</dbReference>
<dbReference type="InterPro" id="IPR016991">
    <property type="entry name" value="UCP032178"/>
</dbReference>
<dbReference type="PANTHER" id="PTHR35791">
    <property type="entry name" value="UPF0754 MEMBRANE PROTEIN YHEB"/>
    <property type="match status" value="1"/>
</dbReference>
<dbReference type="PANTHER" id="PTHR35791:SF1">
    <property type="entry name" value="UPF0754 MEMBRANE PROTEIN YHEB"/>
    <property type="match status" value="1"/>
</dbReference>
<dbReference type="Pfam" id="PF04286">
    <property type="entry name" value="DUF445"/>
    <property type="match status" value="1"/>
</dbReference>
<dbReference type="PIRSF" id="PIRSF032178">
    <property type="entry name" value="UCP032178"/>
    <property type="match status" value="1"/>
</dbReference>
<gene>
    <name type="ordered locus">SAS1767</name>
</gene>
<reference key="1">
    <citation type="journal article" date="2004" name="Proc. Natl. Acad. Sci. U.S.A.">
        <title>Complete genomes of two clinical Staphylococcus aureus strains: evidence for the rapid evolution of virulence and drug resistance.</title>
        <authorList>
            <person name="Holden M.T.G."/>
            <person name="Feil E.J."/>
            <person name="Lindsay J.A."/>
            <person name="Peacock S.J."/>
            <person name="Day N.P.J."/>
            <person name="Enright M.C."/>
            <person name="Foster T.J."/>
            <person name="Moore C.E."/>
            <person name="Hurst L."/>
            <person name="Atkin R."/>
            <person name="Barron A."/>
            <person name="Bason N."/>
            <person name="Bentley S.D."/>
            <person name="Chillingworth C."/>
            <person name="Chillingworth T."/>
            <person name="Churcher C."/>
            <person name="Clark L."/>
            <person name="Corton C."/>
            <person name="Cronin A."/>
            <person name="Doggett J."/>
            <person name="Dowd L."/>
            <person name="Feltwell T."/>
            <person name="Hance Z."/>
            <person name="Harris B."/>
            <person name="Hauser H."/>
            <person name="Holroyd S."/>
            <person name="Jagels K."/>
            <person name="James K.D."/>
            <person name="Lennard N."/>
            <person name="Line A."/>
            <person name="Mayes R."/>
            <person name="Moule S."/>
            <person name="Mungall K."/>
            <person name="Ormond D."/>
            <person name="Quail M.A."/>
            <person name="Rabbinowitsch E."/>
            <person name="Rutherford K.M."/>
            <person name="Sanders M."/>
            <person name="Sharp S."/>
            <person name="Simmonds M."/>
            <person name="Stevens K."/>
            <person name="Whitehead S."/>
            <person name="Barrell B.G."/>
            <person name="Spratt B.G."/>
            <person name="Parkhill J."/>
        </authorList>
    </citation>
    <scope>NUCLEOTIDE SEQUENCE [LARGE SCALE GENOMIC DNA]</scope>
    <source>
        <strain>MSSA476</strain>
    </source>
</reference>
<accession>Q6G889</accession>
<sequence>MNALFIIIFMIVVGAIIGGITNVIAIRMLFHPFKPYYIFKFRVPFTPGLIPKRREEIATKIGQVIEEHLLTETLINEKLKSEQSQQAIESMIQQQLQKLTKDQLSIKQITSQIDIDLEQVLQTNGNQYIESQLNNYYTKHQNQTIASLLPNQLVTFLDQHVDNATDLLCDRARNYLSSAKGTQDINDMLDTFFNEKGKLFGMLQMFMTKESIADRIQQELIRLTSHPKARTIVTSLITNEYQTFKDKPLNELLDASQFNEIAENLSVYVTTYASKQANKPVVTLMPQFVDYLEGQLSSKLANLIIEKLSIHLSTIMKKVDLRGLIEEQINTFDLDYIEKLIIEIANKELKLIMSLGFILGGIIGFFQGLVAIFV</sequence>
<name>Y1767_STAAS</name>
<organism>
    <name type="scientific">Staphylococcus aureus (strain MSSA476)</name>
    <dbReference type="NCBI Taxonomy" id="282459"/>
    <lineage>
        <taxon>Bacteria</taxon>
        <taxon>Bacillati</taxon>
        <taxon>Bacillota</taxon>
        <taxon>Bacilli</taxon>
        <taxon>Bacillales</taxon>
        <taxon>Staphylococcaceae</taxon>
        <taxon>Staphylococcus</taxon>
    </lineage>
</organism>
<feature type="chain" id="PRO_0000388309" description="UPF0754 membrane protein SAS1767">
    <location>
        <begin position="1"/>
        <end position="374"/>
    </location>
</feature>
<feature type="transmembrane region" description="Helical" evidence="2">
    <location>
        <begin position="4"/>
        <end position="24"/>
    </location>
</feature>
<feature type="transmembrane region" description="Helical" evidence="2">
    <location>
        <begin position="354"/>
        <end position="374"/>
    </location>
</feature>
<keyword id="KW-1003">Cell membrane</keyword>
<keyword id="KW-0472">Membrane</keyword>
<keyword id="KW-0812">Transmembrane</keyword>
<keyword id="KW-1133">Transmembrane helix</keyword>
<protein>
    <recommendedName>
        <fullName>UPF0754 membrane protein SAS1767</fullName>
    </recommendedName>
</protein>